<keyword id="KW-0106">Calcium</keyword>
<keyword id="KW-0430">Lectin</keyword>
<keyword id="KW-0464">Manganese</keyword>
<keyword id="KW-0465">Mannose-binding</keyword>
<keyword id="KW-0479">Metal-binding</keyword>
<keyword id="KW-0732">Signal</keyword>
<reference evidence="5" key="1">
    <citation type="journal article" date="2004" name="Theor. Appl. Genet.">
        <title>Identification and isolation of lectin nucleotide sequences and species relationships in the genus Lens (Miller).</title>
        <authorList>
            <person name="Galasso I."/>
            <person name="Lioi L."/>
            <person name="Lanave C."/>
            <person name="Bollini R."/>
            <person name="Sparvoli F."/>
        </authorList>
    </citation>
    <scope>NUCLEOTIDE SEQUENCE [GENOMIC DNA]</scope>
    <source>
        <tissue evidence="5">Leaf</tissue>
    </source>
</reference>
<sequence>MASLQTQMISFYLIFLSILLTTIFFFKVNSTETTSFSITKFSPDQQNLIFQGDGYTTKGKLTLTKAVKSTVGRALYSTPIHIWDRDTGNVANFVTSFTFVIDAPSSYNVADGFTFFIAPVDTKPQTGGGYLGVFNSKEYDKTSQTVAVEFDTFYNAAWDPSNKERHIGIDVNSIKSVSTKSWNLQNGERANVVIAFNAATNVLTVTLTYPNSLEEENVTSYTLNEVVPLKDVVPEWVRIGFSATTGAEFAAHEVHSWSFHSELGGTSSSKQAADA</sequence>
<feature type="signal peptide" evidence="3">
    <location>
        <begin position="1"/>
        <end position="30"/>
    </location>
</feature>
<feature type="chain" id="PRO_0000223514" description="Lectin beta chain" evidence="3">
    <location>
        <begin position="31"/>
        <end position="210"/>
    </location>
</feature>
<feature type="propeptide" id="PRO_0000223515" evidence="3">
    <location>
        <begin position="211"/>
        <end position="217"/>
    </location>
</feature>
<feature type="chain" id="PRO_0000223516" description="Lectin alpha chain" evidence="3">
    <location>
        <begin position="218"/>
        <end position="269"/>
    </location>
</feature>
<feature type="propeptide" id="PRO_0000223517" evidence="3">
    <location>
        <begin position="270"/>
        <end position="275"/>
    </location>
</feature>
<feature type="binding site" evidence="3">
    <location>
        <position position="111"/>
    </location>
    <ligand>
        <name>D-glucose</name>
        <dbReference type="ChEBI" id="CHEBI:4167"/>
    </ligand>
</feature>
<feature type="binding site" evidence="1">
    <location>
        <position position="129"/>
    </location>
    <ligand>
        <name>D-glucose</name>
        <dbReference type="ChEBI" id="CHEBI:4167"/>
    </ligand>
</feature>
<feature type="binding site" evidence="3">
    <location>
        <position position="149"/>
    </location>
    <ligand>
        <name>Mn(2+)</name>
        <dbReference type="ChEBI" id="CHEBI:29035"/>
    </ligand>
</feature>
<feature type="binding site" evidence="3">
    <location>
        <position position="151"/>
    </location>
    <ligand>
        <name>Ca(2+)</name>
        <dbReference type="ChEBI" id="CHEBI:29108"/>
    </ligand>
</feature>
<feature type="binding site" evidence="3">
    <location>
        <position position="151"/>
    </location>
    <ligand>
        <name>Mn(2+)</name>
        <dbReference type="ChEBI" id="CHEBI:29035"/>
    </ligand>
</feature>
<feature type="binding site" evidence="1">
    <location>
        <position position="153"/>
    </location>
    <ligand>
        <name>Ca(2+)</name>
        <dbReference type="ChEBI" id="CHEBI:29108"/>
    </ligand>
</feature>
<feature type="binding site" evidence="3">
    <location>
        <position position="155"/>
    </location>
    <ligand>
        <name>Ca(2+)</name>
        <dbReference type="ChEBI" id="CHEBI:29108"/>
    </ligand>
</feature>
<feature type="binding site" evidence="3">
    <location>
        <position position="159"/>
    </location>
    <ligand>
        <name>Ca(2+)</name>
        <dbReference type="ChEBI" id="CHEBI:29108"/>
    </ligand>
</feature>
<feature type="binding site" evidence="3">
    <location>
        <position position="159"/>
    </location>
    <ligand>
        <name>Mn(2+)</name>
        <dbReference type="ChEBI" id="CHEBI:29035"/>
    </ligand>
</feature>
<feature type="binding site" evidence="3">
    <location>
        <position position="166"/>
    </location>
    <ligand>
        <name>Mn(2+)</name>
        <dbReference type="ChEBI" id="CHEBI:29035"/>
    </ligand>
</feature>
<feature type="binding site" evidence="1">
    <location>
        <position position="246"/>
    </location>
    <ligand>
        <name>D-glucose</name>
        <dbReference type="ChEBI" id="CHEBI:4167"/>
    </ligand>
</feature>
<feature type="binding site" evidence="1">
    <location>
        <position position="247"/>
    </location>
    <ligand>
        <name>D-glucose</name>
        <dbReference type="ChEBI" id="CHEBI:4167"/>
    </ligand>
</feature>
<feature type="site" description="Cleavage" evidence="3">
    <location>
        <begin position="210"/>
        <end position="211"/>
    </location>
</feature>
<feature type="site" description="Cleavage" evidence="3">
    <location>
        <begin position="217"/>
        <end position="218"/>
    </location>
</feature>
<name>LEC_LENCO</name>
<evidence type="ECO:0000250" key="1"/>
<evidence type="ECO:0000250" key="2">
    <source>
        <dbReference type="UniProtKB" id="P02867"/>
    </source>
</evidence>
<evidence type="ECO:0000250" key="3">
    <source>
        <dbReference type="UniProtKB" id="P02870"/>
    </source>
</evidence>
<evidence type="ECO:0000255" key="4"/>
<evidence type="ECO:0000312" key="5">
    <source>
        <dbReference type="EMBL" id="CAC42125.2"/>
    </source>
</evidence>
<organism>
    <name type="scientific">Lens culinaris subsp. orientalis</name>
    <name type="common">Oriental wild lentil</name>
    <name type="synonym">Lens orientalis</name>
    <dbReference type="NCBI Taxonomy" id="129392"/>
    <lineage>
        <taxon>Eukaryota</taxon>
        <taxon>Viridiplantae</taxon>
        <taxon>Streptophyta</taxon>
        <taxon>Embryophyta</taxon>
        <taxon>Tracheophyta</taxon>
        <taxon>Spermatophyta</taxon>
        <taxon>Magnoliopsida</taxon>
        <taxon>eudicotyledons</taxon>
        <taxon>Gunneridae</taxon>
        <taxon>Pentapetalae</taxon>
        <taxon>rosids</taxon>
        <taxon>fabids</taxon>
        <taxon>Fabales</taxon>
        <taxon>Fabaceae</taxon>
        <taxon>Papilionoideae</taxon>
        <taxon>50 kb inversion clade</taxon>
        <taxon>NPAAA clade</taxon>
        <taxon>Hologalegina</taxon>
        <taxon>IRL clade</taxon>
        <taxon>Fabeae</taxon>
        <taxon>Lens</taxon>
    </lineage>
</organism>
<comment type="function">
    <text evidence="2">D-mannose specific lectin.</text>
</comment>
<comment type="subunit">
    <text evidence="1">Heterotetramer of two alpha and two beta chains.</text>
</comment>
<comment type="PTM">
    <text evidence="3">The mature form consists of two chains, alpha and beta, produced by cleavage of the immature protein. These remain cleaved, yet fold together to form one subunit (By similarity).</text>
</comment>
<comment type="miscellaneous">
    <text evidence="3">Binds two manganese (or other transition metal) ions and two calcium ions per heterotetramer. The metal ions are essential for the saccharide-binding activity (By similarity).</text>
</comment>
<comment type="similarity">
    <text evidence="4">Belongs to the leguminous lectin family.</text>
</comment>
<dbReference type="EMBL" id="AJ318219">
    <property type="protein sequence ID" value="CAC42125.2"/>
    <property type="molecule type" value="Genomic_DNA"/>
</dbReference>
<dbReference type="SMR" id="Q93X49"/>
<dbReference type="GO" id="GO:0005537">
    <property type="term" value="F:D-mannose binding"/>
    <property type="evidence" value="ECO:0007669"/>
    <property type="project" value="UniProtKB-KW"/>
</dbReference>
<dbReference type="GO" id="GO:0046872">
    <property type="term" value="F:metal ion binding"/>
    <property type="evidence" value="ECO:0007669"/>
    <property type="project" value="UniProtKB-KW"/>
</dbReference>
<dbReference type="CDD" id="cd06899">
    <property type="entry name" value="lectin_legume_LecRK_Arcelin_ConA"/>
    <property type="match status" value="1"/>
</dbReference>
<dbReference type="FunFam" id="2.60.120.200:FF:000237">
    <property type="entry name" value="Mannose/glucose-specific lectin"/>
    <property type="match status" value="1"/>
</dbReference>
<dbReference type="Gene3D" id="2.60.120.200">
    <property type="match status" value="1"/>
</dbReference>
<dbReference type="InterPro" id="IPR013320">
    <property type="entry name" value="ConA-like_dom_sf"/>
</dbReference>
<dbReference type="InterPro" id="IPR016363">
    <property type="entry name" value="L-lectin"/>
</dbReference>
<dbReference type="InterPro" id="IPR000985">
    <property type="entry name" value="Lectin_LegA_CS"/>
</dbReference>
<dbReference type="InterPro" id="IPR019825">
    <property type="entry name" value="Lectin_legB_Mn/Ca_BS"/>
</dbReference>
<dbReference type="InterPro" id="IPR001220">
    <property type="entry name" value="Legume_lectin_dom"/>
</dbReference>
<dbReference type="InterPro" id="IPR050258">
    <property type="entry name" value="Leguminous_Lectin"/>
</dbReference>
<dbReference type="PANTHER" id="PTHR32401">
    <property type="entry name" value="CONCANAVALIN A-LIKE LECTIN FAMILY PROTEIN"/>
    <property type="match status" value="1"/>
</dbReference>
<dbReference type="PANTHER" id="PTHR32401:SF45">
    <property type="entry name" value="LECTIN"/>
    <property type="match status" value="1"/>
</dbReference>
<dbReference type="Pfam" id="PF00139">
    <property type="entry name" value="Lectin_legB"/>
    <property type="match status" value="1"/>
</dbReference>
<dbReference type="PIRSF" id="PIRSF002690">
    <property type="entry name" value="L-type_lectin_plant"/>
    <property type="match status" value="1"/>
</dbReference>
<dbReference type="SUPFAM" id="SSF49899">
    <property type="entry name" value="Concanavalin A-like lectins/glucanases"/>
    <property type="match status" value="1"/>
</dbReference>
<dbReference type="PROSITE" id="PS00308">
    <property type="entry name" value="LECTIN_LEGUME_ALPHA"/>
    <property type="match status" value="1"/>
</dbReference>
<dbReference type="PROSITE" id="PS00307">
    <property type="entry name" value="LECTIN_LEGUME_BETA"/>
    <property type="match status" value="1"/>
</dbReference>
<accession>Q93X49</accession>
<protein>
    <recommendedName>
        <fullName>Lectin</fullName>
    </recommendedName>
    <component>
        <recommendedName>
            <fullName>Lectin beta chain</fullName>
        </recommendedName>
    </component>
    <component>
        <recommendedName>
            <fullName>Lectin alpha chain</fullName>
        </recommendedName>
    </component>
</protein>
<proteinExistence type="inferred from homology"/>